<protein>
    <recommendedName>
        <fullName evidence="1">tRNA uridine 5-carboxymethylaminomethyl modification enzyme MnmG</fullName>
    </recommendedName>
    <alternativeName>
        <fullName evidence="1">Glucose-inhibited division protein A</fullName>
    </alternativeName>
</protein>
<name>MNMG_ACET2</name>
<organism>
    <name type="scientific">Acetivibrio thermocellus (strain ATCC 27405 / DSM 1237 / JCM 9322 / NBRC 103400 / NCIMB 10682 / NRRL B-4536 / VPI 7372)</name>
    <name type="common">Clostridium thermocellum</name>
    <dbReference type="NCBI Taxonomy" id="203119"/>
    <lineage>
        <taxon>Bacteria</taxon>
        <taxon>Bacillati</taxon>
        <taxon>Bacillota</taxon>
        <taxon>Clostridia</taxon>
        <taxon>Eubacteriales</taxon>
        <taxon>Oscillospiraceae</taxon>
        <taxon>Acetivibrio</taxon>
    </lineage>
</organism>
<proteinExistence type="inferred from homology"/>
<evidence type="ECO:0000255" key="1">
    <source>
        <dbReference type="HAMAP-Rule" id="MF_00129"/>
    </source>
</evidence>
<reference key="1">
    <citation type="submission" date="2007-02" db="EMBL/GenBank/DDBJ databases">
        <title>Complete sequence of Clostridium thermocellum ATCC 27405.</title>
        <authorList>
            <consortium name="US DOE Joint Genome Institute"/>
            <person name="Copeland A."/>
            <person name="Lucas S."/>
            <person name="Lapidus A."/>
            <person name="Barry K."/>
            <person name="Detter J.C."/>
            <person name="Glavina del Rio T."/>
            <person name="Hammon N."/>
            <person name="Israni S."/>
            <person name="Dalin E."/>
            <person name="Tice H."/>
            <person name="Pitluck S."/>
            <person name="Chertkov O."/>
            <person name="Brettin T."/>
            <person name="Bruce D."/>
            <person name="Han C."/>
            <person name="Tapia R."/>
            <person name="Gilna P."/>
            <person name="Schmutz J."/>
            <person name="Larimer F."/>
            <person name="Land M."/>
            <person name="Hauser L."/>
            <person name="Kyrpides N."/>
            <person name="Mikhailova N."/>
            <person name="Wu J.H.D."/>
            <person name="Newcomb M."/>
            <person name="Richardson P."/>
        </authorList>
    </citation>
    <scope>NUCLEOTIDE SEQUENCE [LARGE SCALE GENOMIC DNA]</scope>
    <source>
        <strain>ATCC 27405 / DSM 1237 / JCM 9322 / NBRC 103400 / NCIMB 10682 / NRRL B-4536 / VPI 7372</strain>
    </source>
</reference>
<accession>A3DHY7</accession>
<comment type="function">
    <text evidence="1">NAD-binding protein involved in the addition of a carboxymethylaminomethyl (cmnm) group at the wobble position (U34) of certain tRNAs, forming tRNA-cmnm(5)s(2)U34.</text>
</comment>
<comment type="cofactor">
    <cofactor evidence="1">
        <name>FAD</name>
        <dbReference type="ChEBI" id="CHEBI:57692"/>
    </cofactor>
</comment>
<comment type="subunit">
    <text evidence="1">Homodimer. Heterotetramer of two MnmE and two MnmG subunits.</text>
</comment>
<comment type="subcellular location">
    <subcellularLocation>
        <location evidence="1">Cytoplasm</location>
    </subcellularLocation>
</comment>
<comment type="similarity">
    <text evidence="1">Belongs to the MnmG family.</text>
</comment>
<gene>
    <name evidence="1" type="primary">mnmG</name>
    <name evidence="1" type="synonym">gidA</name>
    <name type="ordered locus">Cthe_2364</name>
</gene>
<sequence length="630" mass="70783">MEFLAGEYDVAVVGAGHAGCEAALAAARLGVKTVVFAINLDSIANMPCNPNIGGTAKGHLVREIDALGGEMGKNADKTFIQSKILNSAKGPAVYSLRAQVDRRSYQIEMKNTLEKQENLDVKQAEIVEILYDEVEGKKTVRGVKTHTGAIYKSKVVILATGTYLKGKIIIGDVSYSGGPDGLFPANKLSDSLREMGIELMRFKTGTPARVNRRSIDFSKMEEQPGDERIVPFSFENEEIKKEQVSCYLTYTNSETHRIIRENLHRSGLFGGLIEGIGPRYCPSIEDKVVRFSDKESHQVFVEPMGLNTQEMYLQGMSTSLPEDVQIEMLRTIPGLENVSIMRNAYAIEYDCINPTQLKLSLELRDVEGLFTAGQINGTSGYEEAAAQGIIAGINAARKIKGLEPLILDRSQAYIGVLIDDIVTKGTNEPYRMMTSRAEYRLLLRQDNADLRLTPIGYEVGLISEERYRKFEEKRRLIEQEIERVKKTNIAPTEKVNEFLKKHNSTPIKSGVKLADLLRRPELDYDTLAEIDENRPDLSFAVREQVSISIKYEGYIKRQMQQVEQFKKLEERKLDKDINYDEIKGLRLEARQKLNKIKPESVGQASRISGVSPADISVLLVYLEQRKRQKS</sequence>
<dbReference type="EMBL" id="CP000568">
    <property type="protein sequence ID" value="ABN53566.1"/>
    <property type="molecule type" value="Genomic_DNA"/>
</dbReference>
<dbReference type="RefSeq" id="WP_003513361.1">
    <property type="nucleotide sequence ID" value="NC_009012.1"/>
</dbReference>
<dbReference type="SMR" id="A3DHY7"/>
<dbReference type="STRING" id="203119.Cthe_2364"/>
<dbReference type="GeneID" id="35803481"/>
<dbReference type="KEGG" id="cth:Cthe_2364"/>
<dbReference type="eggNOG" id="COG0445">
    <property type="taxonomic scope" value="Bacteria"/>
</dbReference>
<dbReference type="HOGENOM" id="CLU_007831_2_2_9"/>
<dbReference type="OrthoDB" id="9815560at2"/>
<dbReference type="Proteomes" id="UP000002145">
    <property type="component" value="Chromosome"/>
</dbReference>
<dbReference type="GO" id="GO:0005829">
    <property type="term" value="C:cytosol"/>
    <property type="evidence" value="ECO:0007669"/>
    <property type="project" value="TreeGrafter"/>
</dbReference>
<dbReference type="GO" id="GO:0050660">
    <property type="term" value="F:flavin adenine dinucleotide binding"/>
    <property type="evidence" value="ECO:0007669"/>
    <property type="project" value="UniProtKB-UniRule"/>
</dbReference>
<dbReference type="GO" id="GO:0030488">
    <property type="term" value="P:tRNA methylation"/>
    <property type="evidence" value="ECO:0007669"/>
    <property type="project" value="TreeGrafter"/>
</dbReference>
<dbReference type="GO" id="GO:0002098">
    <property type="term" value="P:tRNA wobble uridine modification"/>
    <property type="evidence" value="ECO:0007669"/>
    <property type="project" value="InterPro"/>
</dbReference>
<dbReference type="FunFam" id="1.10.10.1800:FF:000001">
    <property type="entry name" value="tRNA uridine 5-carboxymethylaminomethyl modification enzyme MnmG"/>
    <property type="match status" value="1"/>
</dbReference>
<dbReference type="FunFam" id="1.10.150.570:FF:000001">
    <property type="entry name" value="tRNA uridine 5-carboxymethylaminomethyl modification enzyme MnmG"/>
    <property type="match status" value="1"/>
</dbReference>
<dbReference type="FunFam" id="3.50.50.60:FF:000002">
    <property type="entry name" value="tRNA uridine 5-carboxymethylaminomethyl modification enzyme MnmG"/>
    <property type="match status" value="1"/>
</dbReference>
<dbReference type="Gene3D" id="3.50.50.60">
    <property type="entry name" value="FAD/NAD(P)-binding domain"/>
    <property type="match status" value="2"/>
</dbReference>
<dbReference type="Gene3D" id="1.10.150.570">
    <property type="entry name" value="GidA associated domain, C-terminal subdomain"/>
    <property type="match status" value="1"/>
</dbReference>
<dbReference type="Gene3D" id="1.10.10.1800">
    <property type="entry name" value="tRNA uridine 5-carboxymethylaminomethyl modification enzyme MnmG/GidA"/>
    <property type="match status" value="1"/>
</dbReference>
<dbReference type="HAMAP" id="MF_00129">
    <property type="entry name" value="MnmG_GidA"/>
    <property type="match status" value="1"/>
</dbReference>
<dbReference type="InterPro" id="IPR036188">
    <property type="entry name" value="FAD/NAD-bd_sf"/>
</dbReference>
<dbReference type="InterPro" id="IPR049312">
    <property type="entry name" value="GIDA_C_N"/>
</dbReference>
<dbReference type="InterPro" id="IPR004416">
    <property type="entry name" value="MnmG"/>
</dbReference>
<dbReference type="InterPro" id="IPR002218">
    <property type="entry name" value="MnmG-rel"/>
</dbReference>
<dbReference type="InterPro" id="IPR020595">
    <property type="entry name" value="MnmG-rel_CS"/>
</dbReference>
<dbReference type="InterPro" id="IPR026904">
    <property type="entry name" value="MnmG_C"/>
</dbReference>
<dbReference type="InterPro" id="IPR047001">
    <property type="entry name" value="MnmG_C_subdom"/>
</dbReference>
<dbReference type="InterPro" id="IPR044920">
    <property type="entry name" value="MnmG_C_subdom_sf"/>
</dbReference>
<dbReference type="InterPro" id="IPR040131">
    <property type="entry name" value="MnmG_N"/>
</dbReference>
<dbReference type="NCBIfam" id="TIGR00136">
    <property type="entry name" value="mnmG_gidA"/>
    <property type="match status" value="1"/>
</dbReference>
<dbReference type="PANTHER" id="PTHR11806">
    <property type="entry name" value="GLUCOSE INHIBITED DIVISION PROTEIN A"/>
    <property type="match status" value="1"/>
</dbReference>
<dbReference type="PANTHER" id="PTHR11806:SF0">
    <property type="entry name" value="PROTEIN MTO1 HOMOLOG, MITOCHONDRIAL"/>
    <property type="match status" value="1"/>
</dbReference>
<dbReference type="Pfam" id="PF01134">
    <property type="entry name" value="GIDA"/>
    <property type="match status" value="1"/>
</dbReference>
<dbReference type="Pfam" id="PF21680">
    <property type="entry name" value="GIDA_C_1st"/>
    <property type="match status" value="1"/>
</dbReference>
<dbReference type="Pfam" id="PF13932">
    <property type="entry name" value="SAM_GIDA_C"/>
    <property type="match status" value="1"/>
</dbReference>
<dbReference type="PRINTS" id="PR00411">
    <property type="entry name" value="PNDRDTASEI"/>
</dbReference>
<dbReference type="SMART" id="SM01228">
    <property type="entry name" value="GIDA_assoc_3"/>
    <property type="match status" value="1"/>
</dbReference>
<dbReference type="SUPFAM" id="SSF51905">
    <property type="entry name" value="FAD/NAD(P)-binding domain"/>
    <property type="match status" value="1"/>
</dbReference>
<dbReference type="PROSITE" id="PS01280">
    <property type="entry name" value="GIDA_1"/>
    <property type="match status" value="1"/>
</dbReference>
<dbReference type="PROSITE" id="PS01281">
    <property type="entry name" value="GIDA_2"/>
    <property type="match status" value="1"/>
</dbReference>
<feature type="chain" id="PRO_1000016587" description="tRNA uridine 5-carboxymethylaminomethyl modification enzyme MnmG">
    <location>
        <begin position="1"/>
        <end position="630"/>
    </location>
</feature>
<feature type="binding site" evidence="1">
    <location>
        <begin position="14"/>
        <end position="19"/>
    </location>
    <ligand>
        <name>FAD</name>
        <dbReference type="ChEBI" id="CHEBI:57692"/>
    </ligand>
</feature>
<feature type="binding site" evidence="1">
    <location>
        <begin position="277"/>
        <end position="291"/>
    </location>
    <ligand>
        <name>NAD(+)</name>
        <dbReference type="ChEBI" id="CHEBI:57540"/>
    </ligand>
</feature>
<keyword id="KW-0963">Cytoplasm</keyword>
<keyword id="KW-0274">FAD</keyword>
<keyword id="KW-0285">Flavoprotein</keyword>
<keyword id="KW-0520">NAD</keyword>
<keyword id="KW-1185">Reference proteome</keyword>
<keyword id="KW-0819">tRNA processing</keyword>